<feature type="chain" id="PRO_0000278019" description="Nucleoid-associated protein RBE_0048">
    <location>
        <begin position="1"/>
        <end position="107"/>
    </location>
</feature>
<accession>Q1RKI5</accession>
<comment type="function">
    <text evidence="1">Binds to DNA and alters its conformation. May be involved in regulation of gene expression, nucleoid organization and DNA protection.</text>
</comment>
<comment type="subunit">
    <text evidence="1">Homodimer.</text>
</comment>
<comment type="subcellular location">
    <subcellularLocation>
        <location evidence="1">Cytoplasm</location>
        <location evidence="1">Nucleoid</location>
    </subcellularLocation>
</comment>
<comment type="similarity">
    <text evidence="1">Belongs to the YbaB/EbfC family.</text>
</comment>
<reference key="1">
    <citation type="journal article" date="2006" name="PLoS Genet.">
        <title>Genome sequence of Rickettsia bellii illuminates the role of amoebae in gene exchanges between intracellular pathogens.</title>
        <authorList>
            <person name="Ogata H."/>
            <person name="La Scola B."/>
            <person name="Audic S."/>
            <person name="Renesto P."/>
            <person name="Blanc G."/>
            <person name="Robert C."/>
            <person name="Fournier P.-E."/>
            <person name="Claverie J.-M."/>
            <person name="Raoult D."/>
        </authorList>
    </citation>
    <scope>NUCLEOTIDE SEQUENCE [LARGE SCALE GENOMIC DNA]</scope>
    <source>
        <strain>RML369-C</strain>
    </source>
</reference>
<proteinExistence type="inferred from homology"/>
<gene>
    <name type="ordered locus">RBE_0048</name>
</gene>
<protein>
    <recommendedName>
        <fullName evidence="1">Nucleoid-associated protein RBE_0048</fullName>
    </recommendedName>
</protein>
<dbReference type="EMBL" id="CP000087">
    <property type="protein sequence ID" value="ABE04129.1"/>
    <property type="molecule type" value="Genomic_DNA"/>
</dbReference>
<dbReference type="RefSeq" id="WP_011476744.1">
    <property type="nucleotide sequence ID" value="NC_007940.1"/>
</dbReference>
<dbReference type="SMR" id="Q1RKI5"/>
<dbReference type="KEGG" id="rbe:RBE_0048"/>
<dbReference type="eggNOG" id="COG0718">
    <property type="taxonomic scope" value="Bacteria"/>
</dbReference>
<dbReference type="HOGENOM" id="CLU_140930_0_0_5"/>
<dbReference type="OrthoDB" id="9803080at2"/>
<dbReference type="Proteomes" id="UP000001951">
    <property type="component" value="Chromosome"/>
</dbReference>
<dbReference type="GO" id="GO:0043590">
    <property type="term" value="C:bacterial nucleoid"/>
    <property type="evidence" value="ECO:0007669"/>
    <property type="project" value="UniProtKB-UniRule"/>
</dbReference>
<dbReference type="GO" id="GO:0005829">
    <property type="term" value="C:cytosol"/>
    <property type="evidence" value="ECO:0007669"/>
    <property type="project" value="TreeGrafter"/>
</dbReference>
<dbReference type="GO" id="GO:0003677">
    <property type="term" value="F:DNA binding"/>
    <property type="evidence" value="ECO:0007669"/>
    <property type="project" value="UniProtKB-UniRule"/>
</dbReference>
<dbReference type="Gene3D" id="3.30.1310.10">
    <property type="entry name" value="Nucleoid-associated protein YbaB-like domain"/>
    <property type="match status" value="1"/>
</dbReference>
<dbReference type="HAMAP" id="MF_00274">
    <property type="entry name" value="DNA_YbaB_EbfC"/>
    <property type="match status" value="1"/>
</dbReference>
<dbReference type="InterPro" id="IPR036894">
    <property type="entry name" value="YbaB-like_sf"/>
</dbReference>
<dbReference type="InterPro" id="IPR004401">
    <property type="entry name" value="YbaB/EbfC"/>
</dbReference>
<dbReference type="NCBIfam" id="TIGR00103">
    <property type="entry name" value="DNA_YbaB_EbfC"/>
    <property type="match status" value="1"/>
</dbReference>
<dbReference type="PANTHER" id="PTHR33449">
    <property type="entry name" value="NUCLEOID-ASSOCIATED PROTEIN YBAB"/>
    <property type="match status" value="1"/>
</dbReference>
<dbReference type="PANTHER" id="PTHR33449:SF1">
    <property type="entry name" value="NUCLEOID-ASSOCIATED PROTEIN YBAB"/>
    <property type="match status" value="1"/>
</dbReference>
<dbReference type="Pfam" id="PF02575">
    <property type="entry name" value="YbaB_DNA_bd"/>
    <property type="match status" value="1"/>
</dbReference>
<dbReference type="PIRSF" id="PIRSF004555">
    <property type="entry name" value="UCP004555"/>
    <property type="match status" value="1"/>
</dbReference>
<dbReference type="SUPFAM" id="SSF82607">
    <property type="entry name" value="YbaB-like"/>
    <property type="match status" value="1"/>
</dbReference>
<evidence type="ECO:0000255" key="1">
    <source>
        <dbReference type="HAMAP-Rule" id="MF_00274"/>
    </source>
</evidence>
<sequence length="107" mass="11737">MVNFNQFLKQAQTMQKKMQEAQEQMANTRYTGKAGGGLVEIIATGKGEVEKVSIDASLLKEEEKEMLEDLIKVAFNDAKQKCDADSQNSMSGALSGMSLPPGFKMPF</sequence>
<organism>
    <name type="scientific">Rickettsia bellii (strain RML369-C)</name>
    <dbReference type="NCBI Taxonomy" id="336407"/>
    <lineage>
        <taxon>Bacteria</taxon>
        <taxon>Pseudomonadati</taxon>
        <taxon>Pseudomonadota</taxon>
        <taxon>Alphaproteobacteria</taxon>
        <taxon>Rickettsiales</taxon>
        <taxon>Rickettsiaceae</taxon>
        <taxon>Rickettsieae</taxon>
        <taxon>Rickettsia</taxon>
        <taxon>belli group</taxon>
    </lineage>
</organism>
<keyword id="KW-0963">Cytoplasm</keyword>
<keyword id="KW-0238">DNA-binding</keyword>
<name>Y048_RICBR</name>